<keyword id="KW-0489">Methyltransferase</keyword>
<keyword id="KW-1185">Reference proteome</keyword>
<keyword id="KW-0694">RNA-binding</keyword>
<keyword id="KW-0698">rRNA processing</keyword>
<keyword id="KW-0808">Transferase</keyword>
<keyword id="KW-0819">tRNA processing</keyword>
<sequence>MKEILPGLYILRRDRLATSPPSQEPLYGEKIVDGLRVWDPRRSKLAALLLRYPCLEGVVPSGKVLYLGAANGTTVSYLGDILTGGMIYAVEISPRAMRDLLLLAEQRENIIPVLGDAARPETYRRIVEPVDLLYQDVAQRNQAEIASRNASIYLKPNGLMVVMIKARSIDSTARSTEIFDEEIRRLSGVEVLRRVDLPHHRDHVAVVARKLR</sequence>
<protein>
    <recommendedName>
        <fullName evidence="1">Fibrillarin-like rRNA/tRNA 2'-O-methyltransferase</fullName>
        <ecNumber evidence="1">2.1.1.-</ecNumber>
    </recommendedName>
</protein>
<reference key="1">
    <citation type="submission" date="2006-10" db="EMBL/GenBank/DDBJ databases">
        <title>Complete sequence of Methanosaeta thermophila PT.</title>
        <authorList>
            <consortium name="US DOE Joint Genome Institute"/>
            <person name="Copeland A."/>
            <person name="Lucas S."/>
            <person name="Lapidus A."/>
            <person name="Barry K."/>
            <person name="Detter J.C."/>
            <person name="Glavina del Rio T."/>
            <person name="Hammon N."/>
            <person name="Israni S."/>
            <person name="Pitluck S."/>
            <person name="Chain P."/>
            <person name="Malfatti S."/>
            <person name="Shin M."/>
            <person name="Vergez L."/>
            <person name="Schmutz J."/>
            <person name="Larimer F."/>
            <person name="Land M."/>
            <person name="Hauser L."/>
            <person name="Kyrpides N."/>
            <person name="Kim E."/>
            <person name="Smith K.S."/>
            <person name="Ingram-Smith C."/>
            <person name="Richardson P."/>
        </authorList>
    </citation>
    <scope>NUCLEOTIDE SEQUENCE [LARGE SCALE GENOMIC DNA]</scope>
    <source>
        <strain>DSM 6194 / JCM 14653 / NBRC 101360 / PT</strain>
    </source>
</reference>
<name>FLPA_METTP</name>
<evidence type="ECO:0000255" key="1">
    <source>
        <dbReference type="HAMAP-Rule" id="MF_00351"/>
    </source>
</evidence>
<organism>
    <name type="scientific">Methanothrix thermoacetophila (strain DSM 6194 / JCM 14653 / NBRC 101360 / PT)</name>
    <name type="common">Methanosaeta thermophila</name>
    <dbReference type="NCBI Taxonomy" id="349307"/>
    <lineage>
        <taxon>Archaea</taxon>
        <taxon>Methanobacteriati</taxon>
        <taxon>Methanobacteriota</taxon>
        <taxon>Stenosarchaea group</taxon>
        <taxon>Methanomicrobia</taxon>
        <taxon>Methanotrichales</taxon>
        <taxon>Methanotrichaceae</taxon>
        <taxon>Methanothrix</taxon>
    </lineage>
</organism>
<dbReference type="EC" id="2.1.1.-" evidence="1"/>
<dbReference type="EMBL" id="CP000477">
    <property type="protein sequence ID" value="ABK14451.1"/>
    <property type="molecule type" value="Genomic_DNA"/>
</dbReference>
<dbReference type="RefSeq" id="WP_011695847.1">
    <property type="nucleotide sequence ID" value="NC_008553.1"/>
</dbReference>
<dbReference type="SMR" id="A0B6X7"/>
<dbReference type="STRING" id="349307.Mthe_0661"/>
<dbReference type="GeneID" id="4463155"/>
<dbReference type="KEGG" id="mtp:Mthe_0661"/>
<dbReference type="HOGENOM" id="CLU_059055_2_0_2"/>
<dbReference type="OrthoDB" id="6244at2157"/>
<dbReference type="Proteomes" id="UP000000674">
    <property type="component" value="Chromosome"/>
</dbReference>
<dbReference type="GO" id="GO:1990259">
    <property type="term" value="F:histone H2AQ104 methyltransferase activity"/>
    <property type="evidence" value="ECO:0007669"/>
    <property type="project" value="TreeGrafter"/>
</dbReference>
<dbReference type="GO" id="GO:0003723">
    <property type="term" value="F:RNA binding"/>
    <property type="evidence" value="ECO:0007669"/>
    <property type="project" value="UniProtKB-UniRule"/>
</dbReference>
<dbReference type="GO" id="GO:0008649">
    <property type="term" value="F:rRNA methyltransferase activity"/>
    <property type="evidence" value="ECO:0007669"/>
    <property type="project" value="TreeGrafter"/>
</dbReference>
<dbReference type="GO" id="GO:0000494">
    <property type="term" value="P:box C/D sno(s)RNA 3'-end processing"/>
    <property type="evidence" value="ECO:0007669"/>
    <property type="project" value="TreeGrafter"/>
</dbReference>
<dbReference type="GO" id="GO:0008033">
    <property type="term" value="P:tRNA processing"/>
    <property type="evidence" value="ECO:0007669"/>
    <property type="project" value="UniProtKB-UniRule"/>
</dbReference>
<dbReference type="CDD" id="cd02440">
    <property type="entry name" value="AdoMet_MTases"/>
    <property type="match status" value="1"/>
</dbReference>
<dbReference type="Gene3D" id="3.40.50.150">
    <property type="entry name" value="Vaccinia Virus protein VP39"/>
    <property type="match status" value="1"/>
</dbReference>
<dbReference type="HAMAP" id="MF_00351">
    <property type="entry name" value="RNA_methyltransf_FlpA"/>
    <property type="match status" value="1"/>
</dbReference>
<dbReference type="InterPro" id="IPR000692">
    <property type="entry name" value="Fibrillarin"/>
</dbReference>
<dbReference type="InterPro" id="IPR029063">
    <property type="entry name" value="SAM-dependent_MTases_sf"/>
</dbReference>
<dbReference type="NCBIfam" id="NF003276">
    <property type="entry name" value="PRK04266.1-2"/>
    <property type="match status" value="1"/>
</dbReference>
<dbReference type="PANTHER" id="PTHR10335:SF17">
    <property type="entry name" value="FIBRILLARIN"/>
    <property type="match status" value="1"/>
</dbReference>
<dbReference type="PANTHER" id="PTHR10335">
    <property type="entry name" value="RRNA 2-O-METHYLTRANSFERASE FIBRILLARIN"/>
    <property type="match status" value="1"/>
</dbReference>
<dbReference type="Pfam" id="PF01269">
    <property type="entry name" value="Fibrillarin"/>
    <property type="match status" value="1"/>
</dbReference>
<dbReference type="PIRSF" id="PIRSF006540">
    <property type="entry name" value="Nop17p"/>
    <property type="match status" value="1"/>
</dbReference>
<dbReference type="PRINTS" id="PR00052">
    <property type="entry name" value="FIBRILLARIN"/>
</dbReference>
<dbReference type="SMART" id="SM01206">
    <property type="entry name" value="Fibrillarin"/>
    <property type="match status" value="1"/>
</dbReference>
<dbReference type="SUPFAM" id="SSF53335">
    <property type="entry name" value="S-adenosyl-L-methionine-dependent methyltransferases"/>
    <property type="match status" value="1"/>
</dbReference>
<proteinExistence type="inferred from homology"/>
<gene>
    <name evidence="1" type="primary">flpA</name>
    <name type="ordered locus">Mthe_0661</name>
</gene>
<feature type="chain" id="PRO_1000006941" description="Fibrillarin-like rRNA/tRNA 2'-O-methyltransferase">
    <location>
        <begin position="1"/>
        <end position="212"/>
    </location>
</feature>
<feature type="binding site" evidence="1">
    <location>
        <begin position="73"/>
        <end position="74"/>
    </location>
    <ligand>
        <name>S-adenosyl-L-methionine</name>
        <dbReference type="ChEBI" id="CHEBI:59789"/>
    </ligand>
</feature>
<feature type="binding site" evidence="1">
    <location>
        <begin position="91"/>
        <end position="92"/>
    </location>
    <ligand>
        <name>S-adenosyl-L-methionine</name>
        <dbReference type="ChEBI" id="CHEBI:59789"/>
    </ligand>
</feature>
<feature type="binding site" evidence="1">
    <location>
        <begin position="116"/>
        <end position="117"/>
    </location>
    <ligand>
        <name>S-adenosyl-L-methionine</name>
        <dbReference type="ChEBI" id="CHEBI:59789"/>
    </ligand>
</feature>
<feature type="binding site" evidence="1">
    <location>
        <begin position="136"/>
        <end position="139"/>
    </location>
    <ligand>
        <name>S-adenosyl-L-methionine</name>
        <dbReference type="ChEBI" id="CHEBI:59789"/>
    </ligand>
</feature>
<accession>A0B6X7</accession>
<comment type="function">
    <text evidence="1">Involved in pre-rRNA and tRNA processing. Utilizes the methyl donor S-adenosyl-L-methionine to catalyze the site-specific 2'-hydroxyl methylation of ribose moieties in rRNA and tRNA. Site specificity is provided by a guide RNA that base pairs with the substrate. Methylation occurs at a characteristic distance from the sequence involved in base pairing with the guide RNA.</text>
</comment>
<comment type="subunit">
    <text evidence="1">Interacts with nop5. Component of box C/D small ribonucleoprotein (sRNP) particles that contain rpl7ae, FlpA and nop5, plus a guide RNA.</text>
</comment>
<comment type="similarity">
    <text evidence="1">Belongs to the methyltransferase superfamily. Fibrillarin family.</text>
</comment>